<proteinExistence type="inferred from homology"/>
<evidence type="ECO:0000255" key="1">
    <source>
        <dbReference type="HAMAP-Rule" id="MF_03061"/>
    </source>
</evidence>
<evidence type="ECO:0000305" key="2"/>
<dbReference type="EMBL" id="EQ962657">
    <property type="protein sequence ID" value="EED15195.1"/>
    <property type="molecule type" value="Genomic_DNA"/>
</dbReference>
<dbReference type="RefSeq" id="XP_002485148.1">
    <property type="nucleotide sequence ID" value="XM_002485103.1"/>
</dbReference>
<dbReference type="SMR" id="B8MJJ5"/>
<dbReference type="FunCoup" id="B8MJJ5">
    <property type="interactions" value="658"/>
</dbReference>
<dbReference type="STRING" id="441959.B8MJJ5"/>
<dbReference type="GeneID" id="8099560"/>
<dbReference type="VEuPathDB" id="FungiDB:TSTA_046490"/>
<dbReference type="eggNOG" id="KOG0465">
    <property type="taxonomic scope" value="Eukaryota"/>
</dbReference>
<dbReference type="HOGENOM" id="CLU_002794_4_1_1"/>
<dbReference type="InParanoid" id="B8MJJ5"/>
<dbReference type="OMA" id="GQFAKVQ"/>
<dbReference type="OrthoDB" id="198619at2759"/>
<dbReference type="PhylomeDB" id="B8MJJ5"/>
<dbReference type="UniPathway" id="UPA00345"/>
<dbReference type="Proteomes" id="UP000001745">
    <property type="component" value="Unassembled WGS sequence"/>
</dbReference>
<dbReference type="GO" id="GO:0005739">
    <property type="term" value="C:mitochondrion"/>
    <property type="evidence" value="ECO:0007669"/>
    <property type="project" value="UniProtKB-SubCell"/>
</dbReference>
<dbReference type="GO" id="GO:0005525">
    <property type="term" value="F:GTP binding"/>
    <property type="evidence" value="ECO:0007669"/>
    <property type="project" value="UniProtKB-UniRule"/>
</dbReference>
<dbReference type="GO" id="GO:0003924">
    <property type="term" value="F:GTPase activity"/>
    <property type="evidence" value="ECO:0007669"/>
    <property type="project" value="UniProtKB-UniRule"/>
</dbReference>
<dbReference type="GO" id="GO:0003746">
    <property type="term" value="F:translation elongation factor activity"/>
    <property type="evidence" value="ECO:0007669"/>
    <property type="project" value="UniProtKB-UniRule"/>
</dbReference>
<dbReference type="GO" id="GO:0070125">
    <property type="term" value="P:mitochondrial translational elongation"/>
    <property type="evidence" value="ECO:0007669"/>
    <property type="project" value="UniProtKB-UniRule"/>
</dbReference>
<dbReference type="CDD" id="cd01886">
    <property type="entry name" value="EF-G"/>
    <property type="match status" value="1"/>
</dbReference>
<dbReference type="CDD" id="cd16262">
    <property type="entry name" value="EFG_III"/>
    <property type="match status" value="1"/>
</dbReference>
<dbReference type="CDD" id="cd01434">
    <property type="entry name" value="EFG_mtEFG1_IV"/>
    <property type="match status" value="1"/>
</dbReference>
<dbReference type="CDD" id="cd04091">
    <property type="entry name" value="mtEFG1_II_like"/>
    <property type="match status" value="1"/>
</dbReference>
<dbReference type="FunFam" id="3.30.230.10:FF:000003">
    <property type="entry name" value="Elongation factor G"/>
    <property type="match status" value="1"/>
</dbReference>
<dbReference type="FunFam" id="3.30.70.870:FF:000001">
    <property type="entry name" value="Elongation factor G"/>
    <property type="match status" value="1"/>
</dbReference>
<dbReference type="FunFam" id="2.40.30.10:FF:000022">
    <property type="entry name" value="Elongation factor G, mitochondrial"/>
    <property type="match status" value="1"/>
</dbReference>
<dbReference type="FunFam" id="3.30.70.240:FF:000015">
    <property type="entry name" value="Elongation factor G, mitochondrial"/>
    <property type="match status" value="1"/>
</dbReference>
<dbReference type="FunFam" id="3.40.50.300:FF:000558">
    <property type="entry name" value="Elongation factor G, mitochondrial"/>
    <property type="match status" value="1"/>
</dbReference>
<dbReference type="Gene3D" id="3.30.230.10">
    <property type="match status" value="1"/>
</dbReference>
<dbReference type="Gene3D" id="3.30.70.240">
    <property type="match status" value="1"/>
</dbReference>
<dbReference type="Gene3D" id="3.30.70.870">
    <property type="entry name" value="Elongation Factor G (Translational Gtpase), domain 3"/>
    <property type="match status" value="1"/>
</dbReference>
<dbReference type="Gene3D" id="3.40.50.300">
    <property type="entry name" value="P-loop containing nucleotide triphosphate hydrolases"/>
    <property type="match status" value="1"/>
</dbReference>
<dbReference type="Gene3D" id="2.40.30.10">
    <property type="entry name" value="Translation factors"/>
    <property type="match status" value="1"/>
</dbReference>
<dbReference type="HAMAP" id="MF_00054_B">
    <property type="entry name" value="EF_G_EF_2_B"/>
    <property type="match status" value="1"/>
</dbReference>
<dbReference type="InterPro" id="IPR041095">
    <property type="entry name" value="EFG_II"/>
</dbReference>
<dbReference type="InterPro" id="IPR009022">
    <property type="entry name" value="EFG_III"/>
</dbReference>
<dbReference type="InterPro" id="IPR035647">
    <property type="entry name" value="EFG_III/V"/>
</dbReference>
<dbReference type="InterPro" id="IPR047872">
    <property type="entry name" value="EFG_IV"/>
</dbReference>
<dbReference type="InterPro" id="IPR000640">
    <property type="entry name" value="EFG_V-like"/>
</dbReference>
<dbReference type="InterPro" id="IPR004161">
    <property type="entry name" value="EFTu-like_2"/>
</dbReference>
<dbReference type="InterPro" id="IPR031157">
    <property type="entry name" value="G_TR_CS"/>
</dbReference>
<dbReference type="InterPro" id="IPR027417">
    <property type="entry name" value="P-loop_NTPase"/>
</dbReference>
<dbReference type="InterPro" id="IPR020568">
    <property type="entry name" value="Ribosomal_Su5_D2-typ_SF"/>
</dbReference>
<dbReference type="InterPro" id="IPR014721">
    <property type="entry name" value="Ribsml_uS5_D2-typ_fold_subgr"/>
</dbReference>
<dbReference type="InterPro" id="IPR005225">
    <property type="entry name" value="Small_GTP-bd"/>
</dbReference>
<dbReference type="InterPro" id="IPR000795">
    <property type="entry name" value="T_Tr_GTP-bd_dom"/>
</dbReference>
<dbReference type="InterPro" id="IPR009000">
    <property type="entry name" value="Transl_B-barrel_sf"/>
</dbReference>
<dbReference type="InterPro" id="IPR004540">
    <property type="entry name" value="Transl_elong_EFG/EF2"/>
</dbReference>
<dbReference type="InterPro" id="IPR005517">
    <property type="entry name" value="Transl_elong_EFG/EF2_IV"/>
</dbReference>
<dbReference type="NCBIfam" id="TIGR00484">
    <property type="entry name" value="EF-G"/>
    <property type="match status" value="1"/>
</dbReference>
<dbReference type="NCBIfam" id="NF009381">
    <property type="entry name" value="PRK12740.1-5"/>
    <property type="match status" value="1"/>
</dbReference>
<dbReference type="NCBIfam" id="TIGR00231">
    <property type="entry name" value="small_GTP"/>
    <property type="match status" value="1"/>
</dbReference>
<dbReference type="PANTHER" id="PTHR43636">
    <property type="entry name" value="ELONGATION FACTOR G, MITOCHONDRIAL"/>
    <property type="match status" value="1"/>
</dbReference>
<dbReference type="PANTHER" id="PTHR43636:SF2">
    <property type="entry name" value="ELONGATION FACTOR G, MITOCHONDRIAL"/>
    <property type="match status" value="1"/>
</dbReference>
<dbReference type="Pfam" id="PF00679">
    <property type="entry name" value="EFG_C"/>
    <property type="match status" value="1"/>
</dbReference>
<dbReference type="Pfam" id="PF14492">
    <property type="entry name" value="EFG_III"/>
    <property type="match status" value="1"/>
</dbReference>
<dbReference type="Pfam" id="PF03764">
    <property type="entry name" value="EFG_IV"/>
    <property type="match status" value="1"/>
</dbReference>
<dbReference type="Pfam" id="PF00009">
    <property type="entry name" value="GTP_EFTU"/>
    <property type="match status" value="1"/>
</dbReference>
<dbReference type="Pfam" id="PF03144">
    <property type="entry name" value="GTP_EFTU_D2"/>
    <property type="match status" value="1"/>
</dbReference>
<dbReference type="PRINTS" id="PR00315">
    <property type="entry name" value="ELONGATNFCT"/>
</dbReference>
<dbReference type="SMART" id="SM00838">
    <property type="entry name" value="EFG_C"/>
    <property type="match status" value="1"/>
</dbReference>
<dbReference type="SMART" id="SM00889">
    <property type="entry name" value="EFG_IV"/>
    <property type="match status" value="1"/>
</dbReference>
<dbReference type="SUPFAM" id="SSF54980">
    <property type="entry name" value="EF-G C-terminal domain-like"/>
    <property type="match status" value="2"/>
</dbReference>
<dbReference type="SUPFAM" id="SSF52540">
    <property type="entry name" value="P-loop containing nucleoside triphosphate hydrolases"/>
    <property type="match status" value="1"/>
</dbReference>
<dbReference type="SUPFAM" id="SSF54211">
    <property type="entry name" value="Ribosomal protein S5 domain 2-like"/>
    <property type="match status" value="1"/>
</dbReference>
<dbReference type="SUPFAM" id="SSF50447">
    <property type="entry name" value="Translation proteins"/>
    <property type="match status" value="1"/>
</dbReference>
<dbReference type="PROSITE" id="PS00301">
    <property type="entry name" value="G_TR_1"/>
    <property type="match status" value="1"/>
</dbReference>
<dbReference type="PROSITE" id="PS51722">
    <property type="entry name" value="G_TR_2"/>
    <property type="match status" value="1"/>
</dbReference>
<organism>
    <name type="scientific">Talaromyces stipitatus (strain ATCC 10500 / CBS 375.48 / QM 6759 / NRRL 1006)</name>
    <name type="common">Penicillium stipitatum</name>
    <dbReference type="NCBI Taxonomy" id="441959"/>
    <lineage>
        <taxon>Eukaryota</taxon>
        <taxon>Fungi</taxon>
        <taxon>Dikarya</taxon>
        <taxon>Ascomycota</taxon>
        <taxon>Pezizomycotina</taxon>
        <taxon>Eurotiomycetes</taxon>
        <taxon>Eurotiomycetidae</taxon>
        <taxon>Eurotiales</taxon>
        <taxon>Trichocomaceae</taxon>
        <taxon>Talaromyces</taxon>
        <taxon>Talaromyces sect. Talaromyces</taxon>
    </lineage>
</organism>
<comment type="function">
    <text evidence="1">Mitochondrial GTPase that catalyzes the GTP-dependent ribosomal translocation step during translation elongation. During this step, the ribosome changes from the pre-translocational (PRE) to the post-translocational (POST) state as the newly formed A-site-bound peptidyl-tRNA and P-site-bound deacylated tRNA move to the P and E sites, respectively. Catalyzes the coordinated movement of the two tRNA molecules, the mRNA and conformational changes in the ribosome.</text>
</comment>
<comment type="pathway">
    <text evidence="1">Protein biosynthesis; polypeptide chain elongation.</text>
</comment>
<comment type="subcellular location">
    <subcellularLocation>
        <location evidence="1">Mitochondrion</location>
    </subcellularLocation>
</comment>
<comment type="similarity">
    <text evidence="2">Belongs to the TRAFAC class translation factor GTPase superfamily. Classic translation factor GTPase family. EF-G/EF-2 subfamily.</text>
</comment>
<keyword id="KW-0251">Elongation factor</keyword>
<keyword id="KW-0342">GTP-binding</keyword>
<keyword id="KW-0496">Mitochondrion</keyword>
<keyword id="KW-0547">Nucleotide-binding</keyword>
<keyword id="KW-0648">Protein biosynthesis</keyword>
<keyword id="KW-1185">Reference proteome</keyword>
<keyword id="KW-0809">Transit peptide</keyword>
<protein>
    <recommendedName>
        <fullName evidence="1">Elongation factor G, mitochondrial</fullName>
        <shortName evidence="1">EF-Gmt</shortName>
    </recommendedName>
    <alternativeName>
        <fullName evidence="1">Elongation factor G 1, mitochondrial</fullName>
        <shortName evidence="1">mEF-G 1</shortName>
    </alternativeName>
    <alternativeName>
        <fullName evidence="1">Elongation factor G1</fullName>
    </alternativeName>
</protein>
<name>EFGM_TALSN</name>
<reference key="1">
    <citation type="journal article" date="2015" name="Genome Announc.">
        <title>Genome sequence of the AIDS-associated pathogen Penicillium marneffei (ATCC18224) and its near taxonomic relative Talaromyces stipitatus (ATCC10500).</title>
        <authorList>
            <person name="Nierman W.C."/>
            <person name="Fedorova-Abrams N.D."/>
            <person name="Andrianopoulos A."/>
        </authorList>
    </citation>
    <scope>NUCLEOTIDE SEQUENCE [LARGE SCALE GENOMIC DNA]</scope>
    <source>
        <strain>ATCC 10500 / CBS 375.48 / QM 6759 / NRRL 1006</strain>
    </source>
</reference>
<gene>
    <name type="primary">mef1</name>
    <name type="ORF">TSTA_046490</name>
</gene>
<accession>B8MJJ5</accession>
<feature type="transit peptide" description="Mitochondrion" evidence="1">
    <location>
        <begin position="1"/>
        <end position="9"/>
    </location>
</feature>
<feature type="chain" id="PRO_0000385585" description="Elongation factor G, mitochondrial">
    <location>
        <begin position="10"/>
        <end position="804"/>
    </location>
</feature>
<feature type="domain" description="tr-type G">
    <location>
        <begin position="103"/>
        <end position="389"/>
    </location>
</feature>
<feature type="binding site" evidence="1">
    <location>
        <begin position="112"/>
        <end position="119"/>
    </location>
    <ligand>
        <name>GTP</name>
        <dbReference type="ChEBI" id="CHEBI:37565"/>
    </ligand>
</feature>
<feature type="binding site" evidence="1">
    <location>
        <begin position="187"/>
        <end position="191"/>
    </location>
    <ligand>
        <name>GTP</name>
        <dbReference type="ChEBI" id="CHEBI:37565"/>
    </ligand>
</feature>
<feature type="binding site" evidence="1">
    <location>
        <begin position="241"/>
        <end position="244"/>
    </location>
    <ligand>
        <name>GTP</name>
        <dbReference type="ChEBI" id="CHEBI:37565"/>
    </ligand>
</feature>
<sequence>MVRPAQVRALSGLARSATFVRLLPSQSQNALRCASLPVSRLGALPLRATTQITSAPLRQWHQIRNSSATATASLAEQAAADPEGLSQAEIISNIDAEEWKRISKVRNIGIAAHIDSGKTTATERVLFYTGRINAIHEVRGRDSVGAKMDSMDLEREKGITIQSAATFCDWVKKENGKEEKYHFNLIDTPGHIDFTIEVERALRVLDGAVMILCAVSGVQSQTITVDRQMKRYNVPRISFVNKMDRMGANPFKAIDQINNKLKLPAAAVQVPIGAEDEFQGVVDLIRMKAIYNEGPRGETIVEKDEIPEHIKPLAEERRRILIETLADVDDEIAEIFLDEREPTIEQIKAAIRRATIALKFTPVFMGSALADKSIQPMLDGVCDYLPNPSEVTNLALDQKRKEAQVKLLPYGSQPFVGLAFKLEESNFGQLTYIRVYQGTLRKGANVFNARNDKKVKVPRIVRMHSNEMEEVQEIGAGEICAVFGVDCASGDTFTDGQLAYTMSSMFVPEPVISLSIKPKNNKDSANFSKAMARFQREDPTFRVSYDTESEQTIISGMGELHLDIYVERMRREYKVDCETGQPQVAYRETIGRRVEFDHLLKKQSGGPGDYARVVGWMEPSESLEENKFEEQIVGGAISEKFLFACEKGFNLACEKGPLIGHKVLGTKMVINDGATHMTDSSEMSFKNATQQAFRKAFMESQPHVLEPLMKTVVTAPIEFQGDVIGLLNKRNATINDSEIGVDEFTVYADCSLNGMFGFSSHLRAATQGKGEYTMEFSHYEKAPGQLQKELVQKYLKAQADRHKK</sequence>